<gene>
    <name evidence="1" type="primary">ybeY</name>
    <name type="ordered locus">TT_C0683</name>
</gene>
<name>YBEY_THET2</name>
<protein>
    <recommendedName>
        <fullName evidence="1">Endoribonuclease YbeY</fullName>
        <ecNumber evidence="1">3.1.-.-</ecNumber>
    </recommendedName>
</protein>
<reference key="1">
    <citation type="journal article" date="2004" name="Nat. Biotechnol.">
        <title>The genome sequence of the extreme thermophile Thermus thermophilus.</title>
        <authorList>
            <person name="Henne A."/>
            <person name="Brueggemann H."/>
            <person name="Raasch C."/>
            <person name="Wiezer A."/>
            <person name="Hartsch T."/>
            <person name="Liesegang H."/>
            <person name="Johann A."/>
            <person name="Lienard T."/>
            <person name="Gohl O."/>
            <person name="Martinez-Arias R."/>
            <person name="Jacobi C."/>
            <person name="Starkuviene V."/>
            <person name="Schlenczeck S."/>
            <person name="Dencker S."/>
            <person name="Huber R."/>
            <person name="Klenk H.-P."/>
            <person name="Kramer W."/>
            <person name="Merkl R."/>
            <person name="Gottschalk G."/>
            <person name="Fritz H.-J."/>
        </authorList>
    </citation>
    <scope>NUCLEOTIDE SEQUENCE [LARGE SCALE GENOMIC DNA]</scope>
    <source>
        <strain>ATCC BAA-163 / DSM 7039 / HB27</strain>
    </source>
</reference>
<keyword id="KW-0963">Cytoplasm</keyword>
<keyword id="KW-0255">Endonuclease</keyword>
<keyword id="KW-0378">Hydrolase</keyword>
<keyword id="KW-0479">Metal-binding</keyword>
<keyword id="KW-0540">Nuclease</keyword>
<keyword id="KW-0690">Ribosome biogenesis</keyword>
<keyword id="KW-0698">rRNA processing</keyword>
<keyword id="KW-0862">Zinc</keyword>
<evidence type="ECO:0000255" key="1">
    <source>
        <dbReference type="HAMAP-Rule" id="MF_00009"/>
    </source>
</evidence>
<comment type="function">
    <text evidence="1">Single strand-specific metallo-endoribonuclease involved in late-stage 70S ribosome quality control and in maturation of the 3' terminus of the 16S rRNA.</text>
</comment>
<comment type="cofactor">
    <cofactor evidence="1">
        <name>Zn(2+)</name>
        <dbReference type="ChEBI" id="CHEBI:29105"/>
    </cofactor>
    <text evidence="1">Binds 1 zinc ion.</text>
</comment>
<comment type="subcellular location">
    <subcellularLocation>
        <location evidence="1">Cytoplasm</location>
    </subcellularLocation>
</comment>
<comment type="similarity">
    <text evidence="1">Belongs to the endoribonuclease YbeY family.</text>
</comment>
<feature type="chain" id="PRO_0000102554" description="Endoribonuclease YbeY">
    <location>
        <begin position="1"/>
        <end position="139"/>
    </location>
</feature>
<feature type="binding site" evidence="1">
    <location>
        <position position="110"/>
    </location>
    <ligand>
        <name>Zn(2+)</name>
        <dbReference type="ChEBI" id="CHEBI:29105"/>
        <note>catalytic</note>
    </ligand>
</feature>
<feature type="binding site" evidence="1">
    <location>
        <position position="114"/>
    </location>
    <ligand>
        <name>Zn(2+)</name>
        <dbReference type="ChEBI" id="CHEBI:29105"/>
        <note>catalytic</note>
    </ligand>
</feature>
<feature type="binding site" evidence="1">
    <location>
        <position position="120"/>
    </location>
    <ligand>
        <name>Zn(2+)</name>
        <dbReference type="ChEBI" id="CHEBI:29105"/>
        <note>catalytic</note>
    </ligand>
</feature>
<dbReference type="EC" id="3.1.-.-" evidence="1"/>
<dbReference type="EMBL" id="AE017221">
    <property type="protein sequence ID" value="AAS81031.1"/>
    <property type="molecule type" value="Genomic_DNA"/>
</dbReference>
<dbReference type="RefSeq" id="WP_011173125.1">
    <property type="nucleotide sequence ID" value="NC_005835.1"/>
</dbReference>
<dbReference type="SMR" id="Q72JT5"/>
<dbReference type="GeneID" id="3168301"/>
<dbReference type="KEGG" id="tth:TT_C0683"/>
<dbReference type="eggNOG" id="COG0319">
    <property type="taxonomic scope" value="Bacteria"/>
</dbReference>
<dbReference type="HOGENOM" id="CLU_1692595_0_0_0"/>
<dbReference type="OrthoDB" id="9807740at2"/>
<dbReference type="Proteomes" id="UP000000592">
    <property type="component" value="Chromosome"/>
</dbReference>
<dbReference type="GO" id="GO:0005737">
    <property type="term" value="C:cytoplasm"/>
    <property type="evidence" value="ECO:0007669"/>
    <property type="project" value="UniProtKB-SubCell"/>
</dbReference>
<dbReference type="GO" id="GO:0004222">
    <property type="term" value="F:metalloendopeptidase activity"/>
    <property type="evidence" value="ECO:0007669"/>
    <property type="project" value="InterPro"/>
</dbReference>
<dbReference type="GO" id="GO:0004521">
    <property type="term" value="F:RNA endonuclease activity"/>
    <property type="evidence" value="ECO:0007669"/>
    <property type="project" value="UniProtKB-UniRule"/>
</dbReference>
<dbReference type="GO" id="GO:0008270">
    <property type="term" value="F:zinc ion binding"/>
    <property type="evidence" value="ECO:0007669"/>
    <property type="project" value="UniProtKB-UniRule"/>
</dbReference>
<dbReference type="GO" id="GO:0006364">
    <property type="term" value="P:rRNA processing"/>
    <property type="evidence" value="ECO:0007669"/>
    <property type="project" value="UniProtKB-UniRule"/>
</dbReference>
<dbReference type="Gene3D" id="3.40.390.30">
    <property type="entry name" value="Metalloproteases ('zincins'), catalytic domain"/>
    <property type="match status" value="1"/>
</dbReference>
<dbReference type="HAMAP" id="MF_00009">
    <property type="entry name" value="Endoribonucl_YbeY"/>
    <property type="match status" value="1"/>
</dbReference>
<dbReference type="InterPro" id="IPR023091">
    <property type="entry name" value="MetalPrtase_cat_dom_sf_prd"/>
</dbReference>
<dbReference type="InterPro" id="IPR002036">
    <property type="entry name" value="YbeY"/>
</dbReference>
<dbReference type="NCBIfam" id="TIGR00043">
    <property type="entry name" value="rRNA maturation RNase YbeY"/>
    <property type="match status" value="1"/>
</dbReference>
<dbReference type="PANTHER" id="PTHR46986">
    <property type="entry name" value="ENDORIBONUCLEASE YBEY, CHLOROPLASTIC"/>
    <property type="match status" value="1"/>
</dbReference>
<dbReference type="PANTHER" id="PTHR46986:SF1">
    <property type="entry name" value="ENDORIBONUCLEASE YBEY, CHLOROPLASTIC"/>
    <property type="match status" value="1"/>
</dbReference>
<dbReference type="Pfam" id="PF02130">
    <property type="entry name" value="YbeY"/>
    <property type="match status" value="1"/>
</dbReference>
<dbReference type="SUPFAM" id="SSF55486">
    <property type="entry name" value="Metalloproteases ('zincins'), catalytic domain"/>
    <property type="match status" value="1"/>
</dbReference>
<proteinExistence type="inferred from homology"/>
<sequence length="139" mass="15894">MVEVVRNKRPPRGLVPRLRRALAALMEELGVGDKGVTVILTGDRRLRALKREWWGEDEATDVLSFPHYEPGDPFVPPHLGDIWISLDTARRQAEARGASLEEEVLVLAAHGLWHLLGHDHQKEEDWEGFRRVQERILAL</sequence>
<accession>Q72JT5</accession>
<organism>
    <name type="scientific">Thermus thermophilus (strain ATCC BAA-163 / DSM 7039 / HB27)</name>
    <dbReference type="NCBI Taxonomy" id="262724"/>
    <lineage>
        <taxon>Bacteria</taxon>
        <taxon>Thermotogati</taxon>
        <taxon>Deinococcota</taxon>
        <taxon>Deinococci</taxon>
        <taxon>Thermales</taxon>
        <taxon>Thermaceae</taxon>
        <taxon>Thermus</taxon>
    </lineage>
</organism>